<protein>
    <recommendedName>
        <fullName evidence="1">HTH-type transcriptional regulator IscR</fullName>
    </recommendedName>
</protein>
<name>ISCR_YERPG</name>
<accession>A9R819</accession>
<evidence type="ECO:0000255" key="1">
    <source>
        <dbReference type="HAMAP-Rule" id="MF_01176"/>
    </source>
</evidence>
<evidence type="ECO:0000256" key="2">
    <source>
        <dbReference type="SAM" id="MobiDB-lite"/>
    </source>
</evidence>
<feature type="chain" id="PRO_1000138113" description="HTH-type transcriptional regulator IscR">
    <location>
        <begin position="1"/>
        <end position="164"/>
    </location>
</feature>
<feature type="domain" description="HTH rrf2-type" evidence="1">
    <location>
        <begin position="2"/>
        <end position="131"/>
    </location>
</feature>
<feature type="DNA-binding region" description="H-T-H motif" evidence="1">
    <location>
        <begin position="28"/>
        <end position="51"/>
    </location>
</feature>
<feature type="region of interest" description="Disordered" evidence="2">
    <location>
        <begin position="143"/>
        <end position="164"/>
    </location>
</feature>
<feature type="compositionally biased region" description="Polar residues" evidence="2">
    <location>
        <begin position="152"/>
        <end position="164"/>
    </location>
</feature>
<feature type="binding site" evidence="1">
    <location>
        <position position="92"/>
    </location>
    <ligand>
        <name>[2Fe-2S] cluster</name>
        <dbReference type="ChEBI" id="CHEBI:190135"/>
    </ligand>
</feature>
<feature type="binding site" evidence="1">
    <location>
        <position position="98"/>
    </location>
    <ligand>
        <name>[2Fe-2S] cluster</name>
        <dbReference type="ChEBI" id="CHEBI:190135"/>
    </ligand>
</feature>
<feature type="binding site" evidence="1">
    <location>
        <position position="104"/>
    </location>
    <ligand>
        <name>[2Fe-2S] cluster</name>
        <dbReference type="ChEBI" id="CHEBI:190135"/>
    </ligand>
</feature>
<proteinExistence type="inferred from homology"/>
<comment type="function">
    <text evidence="1">Regulates the transcription of several operons and genes involved in the biogenesis of Fe-S clusters and Fe-S-containing proteins.</text>
</comment>
<comment type="cofactor">
    <cofactor evidence="1">
        <name>[2Fe-2S] cluster</name>
        <dbReference type="ChEBI" id="CHEBI:190135"/>
    </cofactor>
    <text evidence="1">Binds 1 [2Fe-2S] cluster.</text>
</comment>
<dbReference type="EMBL" id="CP000901">
    <property type="protein sequence ID" value="ABX85106.1"/>
    <property type="molecule type" value="Genomic_DNA"/>
</dbReference>
<dbReference type="RefSeq" id="WP_002222202.1">
    <property type="nucleotide sequence ID" value="NZ_CP009935.1"/>
</dbReference>
<dbReference type="SMR" id="A9R819"/>
<dbReference type="GeneID" id="96662219"/>
<dbReference type="KEGG" id="ypg:YpAngola_A0436"/>
<dbReference type="PATRIC" id="fig|349746.12.peg.1391"/>
<dbReference type="GO" id="GO:0005829">
    <property type="term" value="C:cytosol"/>
    <property type="evidence" value="ECO:0007669"/>
    <property type="project" value="TreeGrafter"/>
</dbReference>
<dbReference type="GO" id="GO:0051537">
    <property type="term" value="F:2 iron, 2 sulfur cluster binding"/>
    <property type="evidence" value="ECO:0007669"/>
    <property type="project" value="UniProtKB-KW"/>
</dbReference>
<dbReference type="GO" id="GO:0003700">
    <property type="term" value="F:DNA-binding transcription factor activity"/>
    <property type="evidence" value="ECO:0007669"/>
    <property type="project" value="UniProtKB-UniRule"/>
</dbReference>
<dbReference type="GO" id="GO:0003690">
    <property type="term" value="F:double-stranded DNA binding"/>
    <property type="evidence" value="ECO:0007669"/>
    <property type="project" value="UniProtKB-UniRule"/>
</dbReference>
<dbReference type="GO" id="GO:0005506">
    <property type="term" value="F:iron ion binding"/>
    <property type="evidence" value="ECO:0007669"/>
    <property type="project" value="UniProtKB-UniRule"/>
</dbReference>
<dbReference type="FunFam" id="1.10.10.10:FF:000026">
    <property type="entry name" value="HTH-type transcriptional regulator IscR"/>
    <property type="match status" value="1"/>
</dbReference>
<dbReference type="Gene3D" id="1.10.10.10">
    <property type="entry name" value="Winged helix-like DNA-binding domain superfamily/Winged helix DNA-binding domain"/>
    <property type="match status" value="1"/>
</dbReference>
<dbReference type="HAMAP" id="MF_01176">
    <property type="entry name" value="HTH_type_IscR"/>
    <property type="match status" value="1"/>
</dbReference>
<dbReference type="InterPro" id="IPR010242">
    <property type="entry name" value="TF_HTH_IscR"/>
</dbReference>
<dbReference type="InterPro" id="IPR030489">
    <property type="entry name" value="TR_Rrf2-type_CS"/>
</dbReference>
<dbReference type="InterPro" id="IPR000944">
    <property type="entry name" value="Tscrpt_reg_Rrf2"/>
</dbReference>
<dbReference type="InterPro" id="IPR036388">
    <property type="entry name" value="WH-like_DNA-bd_sf"/>
</dbReference>
<dbReference type="InterPro" id="IPR036390">
    <property type="entry name" value="WH_DNA-bd_sf"/>
</dbReference>
<dbReference type="NCBIfam" id="TIGR02010">
    <property type="entry name" value="IscR"/>
    <property type="match status" value="1"/>
</dbReference>
<dbReference type="NCBIfam" id="NF008110">
    <property type="entry name" value="PRK10857.1"/>
    <property type="match status" value="1"/>
</dbReference>
<dbReference type="NCBIfam" id="TIGR00738">
    <property type="entry name" value="rrf2_super"/>
    <property type="match status" value="1"/>
</dbReference>
<dbReference type="PANTHER" id="PTHR33221:SF5">
    <property type="entry name" value="HTH-TYPE TRANSCRIPTIONAL REGULATOR ISCR"/>
    <property type="match status" value="1"/>
</dbReference>
<dbReference type="PANTHER" id="PTHR33221">
    <property type="entry name" value="WINGED HELIX-TURN-HELIX TRANSCRIPTIONAL REGULATOR, RRF2 FAMILY"/>
    <property type="match status" value="1"/>
</dbReference>
<dbReference type="Pfam" id="PF02082">
    <property type="entry name" value="Rrf2"/>
    <property type="match status" value="1"/>
</dbReference>
<dbReference type="SUPFAM" id="SSF46785">
    <property type="entry name" value="Winged helix' DNA-binding domain"/>
    <property type="match status" value="1"/>
</dbReference>
<dbReference type="PROSITE" id="PS01332">
    <property type="entry name" value="HTH_RRF2_1"/>
    <property type="match status" value="1"/>
</dbReference>
<dbReference type="PROSITE" id="PS51197">
    <property type="entry name" value="HTH_RRF2_2"/>
    <property type="match status" value="1"/>
</dbReference>
<keyword id="KW-0001">2Fe-2S</keyword>
<keyword id="KW-0010">Activator</keyword>
<keyword id="KW-0238">DNA-binding</keyword>
<keyword id="KW-0408">Iron</keyword>
<keyword id="KW-0411">Iron-sulfur</keyword>
<keyword id="KW-0479">Metal-binding</keyword>
<keyword id="KW-0678">Repressor</keyword>
<keyword id="KW-0804">Transcription</keyword>
<keyword id="KW-0805">Transcription regulation</keyword>
<sequence length="164" mass="17765">MRLTSKGRYAVTAMLDVALHSQDGPVPLADISERQGISLSYLEQLFSRLRKNGLVASVRGPGGGYLLGKDASAIAVGAVITAVDESVDATRCQGKEGCQGGNRCLTHTLWRDLSERISSFLNNITLAELVNNQDILEVADRQNNDTRRTANGRPQETINVNLRA</sequence>
<reference key="1">
    <citation type="journal article" date="2010" name="J. Bacteriol.">
        <title>Genome sequence of the deep-rooted Yersinia pestis strain Angola reveals new insights into the evolution and pangenome of the plague bacterium.</title>
        <authorList>
            <person name="Eppinger M."/>
            <person name="Worsham P.L."/>
            <person name="Nikolich M.P."/>
            <person name="Riley D.R."/>
            <person name="Sebastian Y."/>
            <person name="Mou S."/>
            <person name="Achtman M."/>
            <person name="Lindler L.E."/>
            <person name="Ravel J."/>
        </authorList>
    </citation>
    <scope>NUCLEOTIDE SEQUENCE [LARGE SCALE GENOMIC DNA]</scope>
    <source>
        <strain>Angola</strain>
    </source>
</reference>
<organism>
    <name type="scientific">Yersinia pestis bv. Antiqua (strain Angola)</name>
    <dbReference type="NCBI Taxonomy" id="349746"/>
    <lineage>
        <taxon>Bacteria</taxon>
        <taxon>Pseudomonadati</taxon>
        <taxon>Pseudomonadota</taxon>
        <taxon>Gammaproteobacteria</taxon>
        <taxon>Enterobacterales</taxon>
        <taxon>Yersiniaceae</taxon>
        <taxon>Yersinia</taxon>
    </lineage>
</organism>
<gene>
    <name evidence="1" type="primary">iscR</name>
    <name type="ordered locus">YpAngola_A0436</name>
</gene>